<organism>
    <name type="scientific">Prochlorococcus marinus (strain AS9601)</name>
    <dbReference type="NCBI Taxonomy" id="146891"/>
    <lineage>
        <taxon>Bacteria</taxon>
        <taxon>Bacillati</taxon>
        <taxon>Cyanobacteriota</taxon>
        <taxon>Cyanophyceae</taxon>
        <taxon>Synechococcales</taxon>
        <taxon>Prochlorococcaceae</taxon>
        <taxon>Prochlorococcus</taxon>
    </lineage>
</organism>
<comment type="function">
    <text evidence="1">Forms part of the ribosomal stalk which helps the ribosome interact with GTP-bound translation factors.</text>
</comment>
<comment type="subunit">
    <text evidence="1">Part of the ribosomal stalk of the 50S ribosomal subunit. Interacts with L10 and the large rRNA to form the base of the stalk. L10 forms an elongated spine to which L12 dimers bind in a sequential fashion forming a multimeric L10(L12)X complex.</text>
</comment>
<comment type="PTM">
    <text evidence="1">One or more lysine residues are methylated.</text>
</comment>
<comment type="similarity">
    <text evidence="1">Belongs to the universal ribosomal protein uL11 family.</text>
</comment>
<gene>
    <name evidence="1" type="primary">rplK</name>
    <name evidence="1" type="synonym">rpl11</name>
    <name type="ordered locus">A9601_02221</name>
</gene>
<dbReference type="EMBL" id="CP000551">
    <property type="protein sequence ID" value="ABM69510.1"/>
    <property type="molecule type" value="Genomic_DNA"/>
</dbReference>
<dbReference type="RefSeq" id="WP_002805232.1">
    <property type="nucleotide sequence ID" value="NC_008816.1"/>
</dbReference>
<dbReference type="SMR" id="A2BNZ9"/>
<dbReference type="STRING" id="146891.A9601_02221"/>
<dbReference type="KEGG" id="pmb:A9601_02221"/>
<dbReference type="eggNOG" id="COG0080">
    <property type="taxonomic scope" value="Bacteria"/>
</dbReference>
<dbReference type="HOGENOM" id="CLU_074237_2_1_3"/>
<dbReference type="OrthoDB" id="9802408at2"/>
<dbReference type="Proteomes" id="UP000002590">
    <property type="component" value="Chromosome"/>
</dbReference>
<dbReference type="GO" id="GO:0022625">
    <property type="term" value="C:cytosolic large ribosomal subunit"/>
    <property type="evidence" value="ECO:0007669"/>
    <property type="project" value="TreeGrafter"/>
</dbReference>
<dbReference type="GO" id="GO:0070180">
    <property type="term" value="F:large ribosomal subunit rRNA binding"/>
    <property type="evidence" value="ECO:0007669"/>
    <property type="project" value="UniProtKB-UniRule"/>
</dbReference>
<dbReference type="GO" id="GO:0003735">
    <property type="term" value="F:structural constituent of ribosome"/>
    <property type="evidence" value="ECO:0007669"/>
    <property type="project" value="InterPro"/>
</dbReference>
<dbReference type="GO" id="GO:0006412">
    <property type="term" value="P:translation"/>
    <property type="evidence" value="ECO:0007669"/>
    <property type="project" value="UniProtKB-UniRule"/>
</dbReference>
<dbReference type="CDD" id="cd00349">
    <property type="entry name" value="Ribosomal_L11"/>
    <property type="match status" value="1"/>
</dbReference>
<dbReference type="FunFam" id="1.10.10.250:FF:000001">
    <property type="entry name" value="50S ribosomal protein L11"/>
    <property type="match status" value="1"/>
</dbReference>
<dbReference type="FunFam" id="3.30.1550.10:FF:000001">
    <property type="entry name" value="50S ribosomal protein L11"/>
    <property type="match status" value="1"/>
</dbReference>
<dbReference type="Gene3D" id="1.10.10.250">
    <property type="entry name" value="Ribosomal protein L11, C-terminal domain"/>
    <property type="match status" value="1"/>
</dbReference>
<dbReference type="Gene3D" id="3.30.1550.10">
    <property type="entry name" value="Ribosomal protein L11/L12, N-terminal domain"/>
    <property type="match status" value="1"/>
</dbReference>
<dbReference type="HAMAP" id="MF_00736">
    <property type="entry name" value="Ribosomal_uL11"/>
    <property type="match status" value="1"/>
</dbReference>
<dbReference type="InterPro" id="IPR000911">
    <property type="entry name" value="Ribosomal_uL11"/>
</dbReference>
<dbReference type="InterPro" id="IPR006519">
    <property type="entry name" value="Ribosomal_uL11_bac-typ"/>
</dbReference>
<dbReference type="InterPro" id="IPR020783">
    <property type="entry name" value="Ribosomal_uL11_C"/>
</dbReference>
<dbReference type="InterPro" id="IPR036769">
    <property type="entry name" value="Ribosomal_uL11_C_sf"/>
</dbReference>
<dbReference type="InterPro" id="IPR020785">
    <property type="entry name" value="Ribosomal_uL11_CS"/>
</dbReference>
<dbReference type="InterPro" id="IPR020784">
    <property type="entry name" value="Ribosomal_uL11_N"/>
</dbReference>
<dbReference type="InterPro" id="IPR036796">
    <property type="entry name" value="Ribosomal_uL11_N_sf"/>
</dbReference>
<dbReference type="NCBIfam" id="TIGR01632">
    <property type="entry name" value="L11_bact"/>
    <property type="match status" value="1"/>
</dbReference>
<dbReference type="PANTHER" id="PTHR11661">
    <property type="entry name" value="60S RIBOSOMAL PROTEIN L12"/>
    <property type="match status" value="1"/>
</dbReference>
<dbReference type="PANTHER" id="PTHR11661:SF1">
    <property type="entry name" value="LARGE RIBOSOMAL SUBUNIT PROTEIN UL11M"/>
    <property type="match status" value="1"/>
</dbReference>
<dbReference type="Pfam" id="PF00298">
    <property type="entry name" value="Ribosomal_L11"/>
    <property type="match status" value="1"/>
</dbReference>
<dbReference type="Pfam" id="PF03946">
    <property type="entry name" value="Ribosomal_L11_N"/>
    <property type="match status" value="1"/>
</dbReference>
<dbReference type="SMART" id="SM00649">
    <property type="entry name" value="RL11"/>
    <property type="match status" value="1"/>
</dbReference>
<dbReference type="SUPFAM" id="SSF54747">
    <property type="entry name" value="Ribosomal L11/L12e N-terminal domain"/>
    <property type="match status" value="1"/>
</dbReference>
<dbReference type="SUPFAM" id="SSF46906">
    <property type="entry name" value="Ribosomal protein L11, C-terminal domain"/>
    <property type="match status" value="1"/>
</dbReference>
<dbReference type="PROSITE" id="PS00359">
    <property type="entry name" value="RIBOSOMAL_L11"/>
    <property type="match status" value="1"/>
</dbReference>
<accession>A2BNZ9</accession>
<sequence>MAKKIVAVIKLALQAGKANPAPPVGPALGQHGVNIMAFCKEYNARTQDKAGFVIPVEISVFEDRSFTFITKTPPASVLITKAAGIEKGSGESAKGSVGNISKAQLEEIAKTKLPDLNCSSVESAMKVIEGTARNMGVSITD</sequence>
<reference key="1">
    <citation type="journal article" date="2007" name="PLoS Genet.">
        <title>Patterns and implications of gene gain and loss in the evolution of Prochlorococcus.</title>
        <authorList>
            <person name="Kettler G.C."/>
            <person name="Martiny A.C."/>
            <person name="Huang K."/>
            <person name="Zucker J."/>
            <person name="Coleman M.L."/>
            <person name="Rodrigue S."/>
            <person name="Chen F."/>
            <person name="Lapidus A."/>
            <person name="Ferriera S."/>
            <person name="Johnson J."/>
            <person name="Steglich C."/>
            <person name="Church G.M."/>
            <person name="Richardson P."/>
            <person name="Chisholm S.W."/>
        </authorList>
    </citation>
    <scope>NUCLEOTIDE SEQUENCE [LARGE SCALE GENOMIC DNA]</scope>
    <source>
        <strain>AS9601</strain>
    </source>
</reference>
<proteinExistence type="inferred from homology"/>
<keyword id="KW-0488">Methylation</keyword>
<keyword id="KW-0687">Ribonucleoprotein</keyword>
<keyword id="KW-0689">Ribosomal protein</keyword>
<keyword id="KW-0694">RNA-binding</keyword>
<keyword id="KW-0699">rRNA-binding</keyword>
<protein>
    <recommendedName>
        <fullName evidence="1">Large ribosomal subunit protein uL11</fullName>
    </recommendedName>
    <alternativeName>
        <fullName evidence="2">50S ribosomal protein L11</fullName>
    </alternativeName>
</protein>
<feature type="chain" id="PRO_1000046240" description="Large ribosomal subunit protein uL11">
    <location>
        <begin position="1"/>
        <end position="141"/>
    </location>
</feature>
<name>RL11_PROMS</name>
<evidence type="ECO:0000255" key="1">
    <source>
        <dbReference type="HAMAP-Rule" id="MF_00736"/>
    </source>
</evidence>
<evidence type="ECO:0000305" key="2"/>